<gene>
    <name evidence="2" type="primary">NAAT1</name>
    <name type="ORF">GA16959</name>
</gene>
<evidence type="ECO:0000250" key="1"/>
<evidence type="ECO:0000250" key="2">
    <source>
        <dbReference type="UniProtKB" id="Q9W4C5"/>
    </source>
</evidence>
<evidence type="ECO:0000255" key="3"/>
<evidence type="ECO:0000256" key="4">
    <source>
        <dbReference type="SAM" id="MobiDB-lite"/>
    </source>
</evidence>
<evidence type="ECO:0000305" key="5"/>
<evidence type="ECO:0000312" key="6">
    <source>
        <dbReference type="EMBL" id="EAL32192.1"/>
    </source>
</evidence>
<reference evidence="6" key="1">
    <citation type="journal article" date="2005" name="Genome Res.">
        <title>Comparative genome sequencing of Drosophila pseudoobscura: chromosomal, gene, and cis-element evolution.</title>
        <authorList>
            <person name="Richards S."/>
            <person name="Liu Y."/>
            <person name="Bettencourt B.R."/>
            <person name="Hradecky P."/>
            <person name="Letovsky S."/>
            <person name="Nielsen R."/>
            <person name="Thornton K."/>
            <person name="Hubisz M.J."/>
            <person name="Chen R."/>
            <person name="Meisel R.P."/>
            <person name="Couronne O."/>
            <person name="Hua S."/>
            <person name="Smith M.A."/>
            <person name="Zhang P."/>
            <person name="Liu J."/>
            <person name="Bussemaker H.J."/>
            <person name="van Batenburg M.F."/>
            <person name="Howells S.L."/>
            <person name="Scherer S.E."/>
            <person name="Sodergren E."/>
            <person name="Matthews B.B."/>
            <person name="Crosby M.A."/>
            <person name="Schroeder A.J."/>
            <person name="Ortiz-Barrientos D."/>
            <person name="Rives C.M."/>
            <person name="Metzker M.L."/>
            <person name="Muzny D.M."/>
            <person name="Scott G."/>
            <person name="Steffen D."/>
            <person name="Wheeler D.A."/>
            <person name="Worley K.C."/>
            <person name="Havlak P."/>
            <person name="Durbin K.J."/>
            <person name="Egan A."/>
            <person name="Gill R."/>
            <person name="Hume J."/>
            <person name="Morgan M.B."/>
            <person name="Miner G."/>
            <person name="Hamilton C."/>
            <person name="Huang Y."/>
            <person name="Waldron L."/>
            <person name="Verduzco D."/>
            <person name="Clerc-Blankenburg K.P."/>
            <person name="Dubchak I."/>
            <person name="Noor M.A.F."/>
            <person name="Anderson W."/>
            <person name="White K.P."/>
            <person name="Clark A.G."/>
            <person name="Schaeffer S.W."/>
            <person name="Gelbart W.M."/>
            <person name="Weinstock G.M."/>
            <person name="Gibbs R.A."/>
        </authorList>
    </citation>
    <scope>NUCLEOTIDE SEQUENCE [LARGE SCALE GENOMIC DNA]</scope>
    <source>
        <strain>MV2-25 / Tucson 14011-0121.94</strain>
    </source>
</reference>
<sequence length="653" mass="72810">MELKGVHQQNGTSNGTGAAGTEGESPPPAPAPATAEAAASLETTTEKVDAEQQKTERTNWGNGLEFLMSCISVSVGLGNVWRFPFTAYENGGGAFLIPYIIVLFLIGKPMYYLEMIMGQFTSQGTVKIWSVVPGFVGVGYGQAFATICIITYYSSLLALTLFYLFVSFQSVLPWSYCWEEWMNCVDSRPQEDTDALLLSSSNVTNVTALTDTVKLQSSSELYFLNVVIKEKMDISDGIGDPDWKLTLALFVSWVVIFLVIMRGVKSSGKAAYFLALFPYVVLFILLVRAVTLEGARDGIIFFLEPQWGELLNPTVWKNAVVQCFFSLAVGSGPIIMFASYNRFDHGIYRDAMIVTTLDTLTSLLGGITIFAILGNLAHNLQIENIRDVVRSGTGLAFISYPDAISKFQAVPQLFSVLFFFMLFVLGIGSIVALQSTIVTILCDQFKSWKYWKVALATSICGFLMGLVYVTPGGQWILTLVDFYGGTYVVFILAIFELAGIVWIYGMQNFCDDVEFMCNRRVSLYWRVCWSFFTPVMMIVIFIYSMVTIEPITYSEQFFPEAGNVAGWLLFGIGAAQFPLWWMWYISHHREGSLGQSFVASLRPSDKWGPANPETKRQWVIFKNEKAAQRATKKQSSKMGAFWQKLGHFCGSNT</sequence>
<keyword id="KW-0029">Amino-acid transport</keyword>
<keyword id="KW-0325">Glycoprotein</keyword>
<keyword id="KW-0406">Ion transport</keyword>
<keyword id="KW-0472">Membrane</keyword>
<keyword id="KW-1185">Reference proteome</keyword>
<keyword id="KW-0915">Sodium</keyword>
<keyword id="KW-0739">Sodium transport</keyword>
<keyword id="KW-0769">Symport</keyword>
<keyword id="KW-0812">Transmembrane</keyword>
<keyword id="KW-1133">Transmembrane helix</keyword>
<keyword id="KW-0813">Transport</keyword>
<name>NAAT1_DROPS</name>
<accession>Q29GB8</accession>
<dbReference type="EMBL" id="CH379064">
    <property type="protein sequence ID" value="EAL32192.1"/>
    <property type="molecule type" value="Genomic_DNA"/>
</dbReference>
<dbReference type="RefSeq" id="XP_001355135.1">
    <property type="nucleotide sequence ID" value="XM_001355099.2"/>
</dbReference>
<dbReference type="SMR" id="Q29GB8"/>
<dbReference type="FunCoup" id="Q29GB8">
    <property type="interactions" value="41"/>
</dbReference>
<dbReference type="GlyCosmos" id="Q29GB8">
    <property type="glycosylation" value="2 sites, No reported glycans"/>
</dbReference>
<dbReference type="EnsemblMetazoa" id="FBtr0289297">
    <property type="protein sequence ID" value="FBpp0287735"/>
    <property type="gene ID" value="FBgn0076973"/>
</dbReference>
<dbReference type="GeneID" id="4815002"/>
<dbReference type="KEGG" id="dpo:4815002"/>
<dbReference type="CTD" id="31457"/>
<dbReference type="eggNOG" id="KOG3660">
    <property type="taxonomic scope" value="Eukaryota"/>
</dbReference>
<dbReference type="HOGENOM" id="CLU_006855_9_5_1"/>
<dbReference type="InParanoid" id="Q29GB8"/>
<dbReference type="OMA" id="LQNFCDD"/>
<dbReference type="PhylomeDB" id="Q29GB8"/>
<dbReference type="Proteomes" id="UP000001819">
    <property type="component" value="Chromosome X"/>
</dbReference>
<dbReference type="Bgee" id="FBgn0076973">
    <property type="expression patterns" value="Expressed in insect adult head and 1 other cell type or tissue"/>
</dbReference>
<dbReference type="GO" id="GO:0005886">
    <property type="term" value="C:plasma membrane"/>
    <property type="evidence" value="ECO:0000305"/>
    <property type="project" value="UniProtKB"/>
</dbReference>
<dbReference type="GO" id="GO:0005283">
    <property type="term" value="F:amino acid:sodium symporter activity"/>
    <property type="evidence" value="ECO:0000250"/>
    <property type="project" value="UniProtKB"/>
</dbReference>
<dbReference type="GO" id="GO:0042943">
    <property type="term" value="F:D-amino acid transmembrane transporter activity"/>
    <property type="evidence" value="ECO:0000250"/>
    <property type="project" value="UniProtKB"/>
</dbReference>
<dbReference type="GO" id="GO:0015179">
    <property type="term" value="F:L-amino acid transmembrane transporter activity"/>
    <property type="evidence" value="ECO:0007669"/>
    <property type="project" value="TreeGrafter"/>
</dbReference>
<dbReference type="GO" id="GO:0015175">
    <property type="term" value="F:neutral L-amino acid transmembrane transporter activity"/>
    <property type="evidence" value="ECO:0000250"/>
    <property type="project" value="UniProtKB"/>
</dbReference>
<dbReference type="GO" id="GO:0089718">
    <property type="term" value="P:amino acid import across plasma membrane"/>
    <property type="evidence" value="ECO:0007669"/>
    <property type="project" value="TreeGrafter"/>
</dbReference>
<dbReference type="GO" id="GO:0042940">
    <property type="term" value="P:D-amino acid transport"/>
    <property type="evidence" value="ECO:0000250"/>
    <property type="project" value="UniProtKB"/>
</dbReference>
<dbReference type="GO" id="GO:0015804">
    <property type="term" value="P:neutral amino acid transport"/>
    <property type="evidence" value="ECO:0000250"/>
    <property type="project" value="UniProtKB"/>
</dbReference>
<dbReference type="GO" id="GO:0006814">
    <property type="term" value="P:sodium ion transport"/>
    <property type="evidence" value="ECO:0000250"/>
    <property type="project" value="UniProtKB"/>
</dbReference>
<dbReference type="CDD" id="cd10324">
    <property type="entry name" value="SLC6sbd"/>
    <property type="match status" value="1"/>
</dbReference>
<dbReference type="InterPro" id="IPR000175">
    <property type="entry name" value="Na/ntran_symport"/>
</dbReference>
<dbReference type="InterPro" id="IPR037272">
    <property type="entry name" value="SNS_sf"/>
</dbReference>
<dbReference type="PANTHER" id="PTHR11616:SF321">
    <property type="entry name" value="SODIUM-DEPENDENT NUTRIENT AMINO ACID TRANSPORTER 1-RELATED"/>
    <property type="match status" value="1"/>
</dbReference>
<dbReference type="PANTHER" id="PTHR11616">
    <property type="entry name" value="SODIUM/CHLORIDE DEPENDENT TRANSPORTER"/>
    <property type="match status" value="1"/>
</dbReference>
<dbReference type="Pfam" id="PF00209">
    <property type="entry name" value="SNF"/>
    <property type="match status" value="1"/>
</dbReference>
<dbReference type="PRINTS" id="PR00176">
    <property type="entry name" value="NANEUSMPORT"/>
</dbReference>
<dbReference type="SUPFAM" id="SSF161070">
    <property type="entry name" value="SNF-like"/>
    <property type="match status" value="1"/>
</dbReference>
<dbReference type="PROSITE" id="PS00610">
    <property type="entry name" value="NA_NEUROTRAN_SYMP_1"/>
    <property type="match status" value="1"/>
</dbReference>
<dbReference type="PROSITE" id="PS50267">
    <property type="entry name" value="NA_NEUROTRAN_SYMP_3"/>
    <property type="match status" value="1"/>
</dbReference>
<organism>
    <name type="scientific">Drosophila pseudoobscura pseudoobscura</name>
    <name type="common">Fruit fly</name>
    <dbReference type="NCBI Taxonomy" id="46245"/>
    <lineage>
        <taxon>Eukaryota</taxon>
        <taxon>Metazoa</taxon>
        <taxon>Ecdysozoa</taxon>
        <taxon>Arthropoda</taxon>
        <taxon>Hexapoda</taxon>
        <taxon>Insecta</taxon>
        <taxon>Pterygota</taxon>
        <taxon>Neoptera</taxon>
        <taxon>Endopterygota</taxon>
        <taxon>Diptera</taxon>
        <taxon>Brachycera</taxon>
        <taxon>Muscomorpha</taxon>
        <taxon>Ephydroidea</taxon>
        <taxon>Drosophilidae</taxon>
        <taxon>Drosophila</taxon>
        <taxon>Sophophora</taxon>
    </lineage>
</organism>
<proteinExistence type="inferred from homology"/>
<feature type="chain" id="PRO_0000386586" description="Sodium-dependent nutrient amino acid transporter 1">
    <location>
        <begin position="1"/>
        <end position="653"/>
    </location>
</feature>
<feature type="topological domain" description="Cytoplasmic" evidence="3">
    <location>
        <begin position="1"/>
        <end position="59"/>
    </location>
</feature>
<feature type="transmembrane region" description="Helical; Name=1" evidence="3">
    <location>
        <begin position="60"/>
        <end position="80"/>
    </location>
</feature>
<feature type="transmembrane region" description="Helical; Name=2" evidence="3">
    <location>
        <begin position="93"/>
        <end position="113"/>
    </location>
</feature>
<feature type="transmembrane region" description="Helical; Name=3" evidence="3">
    <location>
        <begin position="125"/>
        <end position="145"/>
    </location>
</feature>
<feature type="transmembrane region" description="Helical; Name=4" evidence="3">
    <location>
        <begin position="146"/>
        <end position="166"/>
    </location>
</feature>
<feature type="transmembrane region" description="Helical; Name=5" evidence="3">
    <location>
        <begin position="241"/>
        <end position="261"/>
    </location>
</feature>
<feature type="transmembrane region" description="Helical; Name=6" evidence="3">
    <location>
        <begin position="270"/>
        <end position="290"/>
    </location>
</feature>
<feature type="transmembrane region" description="Helical; Name=7" evidence="3">
    <location>
        <begin position="319"/>
        <end position="339"/>
    </location>
</feature>
<feature type="transmembrane region" description="Helical; Name=8" evidence="3">
    <location>
        <begin position="353"/>
        <end position="373"/>
    </location>
</feature>
<feature type="transmembrane region" description="Helical; Name=9" evidence="3">
    <location>
        <begin position="413"/>
        <end position="433"/>
    </location>
</feature>
<feature type="transmembrane region" description="Helical; Name=10" evidence="3">
    <location>
        <begin position="459"/>
        <end position="479"/>
    </location>
</feature>
<feature type="transmembrane region" description="Helical; Name=11" evidence="3">
    <location>
        <begin position="486"/>
        <end position="506"/>
    </location>
</feature>
<feature type="transmembrane region" description="Helical; Name=12" evidence="3">
    <location>
        <begin position="528"/>
        <end position="548"/>
    </location>
</feature>
<feature type="transmembrane region" description="Helical; Name=13" evidence="3">
    <location>
        <begin position="565"/>
        <end position="585"/>
    </location>
</feature>
<feature type="region of interest" description="Disordered" evidence="4">
    <location>
        <begin position="1"/>
        <end position="55"/>
    </location>
</feature>
<feature type="compositionally biased region" description="Low complexity" evidence="4">
    <location>
        <begin position="10"/>
        <end position="24"/>
    </location>
</feature>
<feature type="compositionally biased region" description="Low complexity" evidence="4">
    <location>
        <begin position="32"/>
        <end position="43"/>
    </location>
</feature>
<feature type="compositionally biased region" description="Basic and acidic residues" evidence="4">
    <location>
        <begin position="44"/>
        <end position="55"/>
    </location>
</feature>
<feature type="glycosylation site" description="N-linked (GlcNAc...) asparagine" evidence="3">
    <location>
        <position position="202"/>
    </location>
</feature>
<feature type="glycosylation site" description="N-linked (GlcNAc...) asparagine" evidence="3">
    <location>
        <position position="205"/>
    </location>
</feature>
<comment type="function">
    <text evidence="1">Unusual broad substrate spectrum amino acid:sodium cotransporter that promotes absorption of the D isomers of essential amino acids. Neutral amino acids are the preferred substrates, especially methionine and phenylalanine (By similarity).</text>
</comment>
<comment type="subcellular location">
    <subcellularLocation>
        <location evidence="5">Membrane</location>
        <topology evidence="5">Multi-pass membrane protein</topology>
    </subcellularLocation>
</comment>
<comment type="similarity">
    <text evidence="5">Belongs to the sodium:neurotransmitter symporter (SNF) (TC 2.A.22) family.</text>
</comment>
<protein>
    <recommendedName>
        <fullName evidence="2">Sodium-dependent nutrient amino acid transporter 1</fullName>
    </recommendedName>
</protein>